<comment type="function">
    <text evidence="1">Catalyzes the conversion of UDP-4-keto-arabinose (UDP-Ara4O) to UDP-4-amino-4-deoxy-L-arabinose (UDP-L-Ara4N). The modified arabinose is attached to lipid A and is required for resistance to polymyxin and cationic antimicrobial peptides.</text>
</comment>
<comment type="catalytic activity">
    <reaction evidence="1">
        <text>UDP-4-amino-4-deoxy-beta-L-arabinose + 2-oxoglutarate = UDP-beta-L-threo-pentopyranos-4-ulose + L-glutamate</text>
        <dbReference type="Rhea" id="RHEA:24710"/>
        <dbReference type="ChEBI" id="CHEBI:16810"/>
        <dbReference type="ChEBI" id="CHEBI:29985"/>
        <dbReference type="ChEBI" id="CHEBI:58708"/>
        <dbReference type="ChEBI" id="CHEBI:58710"/>
        <dbReference type="EC" id="2.6.1.87"/>
    </reaction>
</comment>
<comment type="cofactor">
    <cofactor evidence="1">
        <name>pyridoxal 5'-phosphate</name>
        <dbReference type="ChEBI" id="CHEBI:597326"/>
    </cofactor>
</comment>
<comment type="pathway">
    <text evidence="1">Nucleotide-sugar biosynthesis; UDP-4-deoxy-4-formamido-beta-L-arabinose biosynthesis; UDP-4-deoxy-4-formamido-beta-L-arabinose from UDP-alpha-D-glucuronate: step 2/3.</text>
</comment>
<comment type="pathway">
    <text evidence="1">Bacterial outer membrane biogenesis; lipopolysaccharide biosynthesis.</text>
</comment>
<comment type="subunit">
    <text evidence="1">Homodimer.</text>
</comment>
<comment type="similarity">
    <text evidence="1">Belongs to the DegT/DnrJ/EryC1 family. ArnB subfamily.</text>
</comment>
<dbReference type="EC" id="2.6.1.87" evidence="1"/>
<dbReference type="EMBL" id="CP000094">
    <property type="protein sequence ID" value="ABA74582.1"/>
    <property type="molecule type" value="Genomic_DNA"/>
</dbReference>
<dbReference type="RefSeq" id="WP_011334253.1">
    <property type="nucleotide sequence ID" value="NC_007492.2"/>
</dbReference>
<dbReference type="SMR" id="Q3KCC3"/>
<dbReference type="KEGG" id="pfo:Pfl01_2841"/>
<dbReference type="eggNOG" id="COG0399">
    <property type="taxonomic scope" value="Bacteria"/>
</dbReference>
<dbReference type="HOGENOM" id="CLU_033332_0_3_6"/>
<dbReference type="UniPathway" id="UPA00030"/>
<dbReference type="UniPathway" id="UPA00032">
    <property type="reaction ID" value="UER00493"/>
</dbReference>
<dbReference type="Proteomes" id="UP000002704">
    <property type="component" value="Chromosome"/>
</dbReference>
<dbReference type="GO" id="GO:0016020">
    <property type="term" value="C:membrane"/>
    <property type="evidence" value="ECO:0007669"/>
    <property type="project" value="GOC"/>
</dbReference>
<dbReference type="GO" id="GO:0030170">
    <property type="term" value="F:pyridoxal phosphate binding"/>
    <property type="evidence" value="ECO:0007669"/>
    <property type="project" value="TreeGrafter"/>
</dbReference>
<dbReference type="GO" id="GO:0099620">
    <property type="term" value="F:UDP-4-amino-4-deoxy-L-arabinose aminotransferase"/>
    <property type="evidence" value="ECO:0007669"/>
    <property type="project" value="UniProtKB-EC"/>
</dbReference>
<dbReference type="GO" id="GO:0009245">
    <property type="term" value="P:lipid A biosynthetic process"/>
    <property type="evidence" value="ECO:0007669"/>
    <property type="project" value="UniProtKB-KW"/>
</dbReference>
<dbReference type="GO" id="GO:0009103">
    <property type="term" value="P:lipopolysaccharide biosynthetic process"/>
    <property type="evidence" value="ECO:0007669"/>
    <property type="project" value="UniProtKB-UniRule"/>
</dbReference>
<dbReference type="GO" id="GO:0046677">
    <property type="term" value="P:response to antibiotic"/>
    <property type="evidence" value="ECO:0007669"/>
    <property type="project" value="UniProtKB-KW"/>
</dbReference>
<dbReference type="CDD" id="cd00616">
    <property type="entry name" value="AHBA_syn"/>
    <property type="match status" value="1"/>
</dbReference>
<dbReference type="FunFam" id="3.40.640.10:FF:000040">
    <property type="entry name" value="UDP-4-amino-4-deoxy-L-arabinose--oxoglutarate aminotransferase"/>
    <property type="match status" value="1"/>
</dbReference>
<dbReference type="FunFam" id="3.90.1150.10:FF:000030">
    <property type="entry name" value="UDP-4-amino-4-deoxy-L-arabinose--oxoglutarate aminotransferase"/>
    <property type="match status" value="1"/>
</dbReference>
<dbReference type="Gene3D" id="3.90.1150.10">
    <property type="entry name" value="Aspartate Aminotransferase, domain 1"/>
    <property type="match status" value="1"/>
</dbReference>
<dbReference type="Gene3D" id="3.40.640.10">
    <property type="entry name" value="Type I PLP-dependent aspartate aminotransferase-like (Major domain)"/>
    <property type="match status" value="1"/>
</dbReference>
<dbReference type="HAMAP" id="MF_01167">
    <property type="entry name" value="ArnB_transfer"/>
    <property type="match status" value="1"/>
</dbReference>
<dbReference type="InterPro" id="IPR022850">
    <property type="entry name" value="ArnB_NH2Trfase"/>
</dbReference>
<dbReference type="InterPro" id="IPR000653">
    <property type="entry name" value="DegT/StrS_aminotransferase"/>
</dbReference>
<dbReference type="InterPro" id="IPR015424">
    <property type="entry name" value="PyrdxlP-dep_Trfase"/>
</dbReference>
<dbReference type="InterPro" id="IPR015421">
    <property type="entry name" value="PyrdxlP-dep_Trfase_major"/>
</dbReference>
<dbReference type="InterPro" id="IPR015422">
    <property type="entry name" value="PyrdxlP-dep_Trfase_small"/>
</dbReference>
<dbReference type="NCBIfam" id="NF008658">
    <property type="entry name" value="PRK11658.1"/>
    <property type="match status" value="1"/>
</dbReference>
<dbReference type="PANTHER" id="PTHR30244:SF34">
    <property type="entry name" value="DTDP-4-AMINO-4,6-DIDEOXYGALACTOSE TRANSAMINASE"/>
    <property type="match status" value="1"/>
</dbReference>
<dbReference type="PANTHER" id="PTHR30244">
    <property type="entry name" value="TRANSAMINASE"/>
    <property type="match status" value="1"/>
</dbReference>
<dbReference type="Pfam" id="PF01041">
    <property type="entry name" value="DegT_DnrJ_EryC1"/>
    <property type="match status" value="1"/>
</dbReference>
<dbReference type="PIRSF" id="PIRSF000390">
    <property type="entry name" value="PLP_StrS"/>
    <property type="match status" value="1"/>
</dbReference>
<dbReference type="SUPFAM" id="SSF53383">
    <property type="entry name" value="PLP-dependent transferases"/>
    <property type="match status" value="1"/>
</dbReference>
<keyword id="KW-0032">Aminotransferase</keyword>
<keyword id="KW-0046">Antibiotic resistance</keyword>
<keyword id="KW-0441">Lipid A biosynthesis</keyword>
<keyword id="KW-0444">Lipid biosynthesis</keyword>
<keyword id="KW-0443">Lipid metabolism</keyword>
<keyword id="KW-0448">Lipopolysaccharide biosynthesis</keyword>
<keyword id="KW-0663">Pyridoxal phosphate</keyword>
<keyword id="KW-0808">Transferase</keyword>
<evidence type="ECO:0000255" key="1">
    <source>
        <dbReference type="HAMAP-Rule" id="MF_01167"/>
    </source>
</evidence>
<accession>Q3KCC3</accession>
<feature type="chain" id="PRO_1000065687" description="UDP-4-amino-4-deoxy-L-arabinose--oxoglutarate aminotransferase">
    <location>
        <begin position="1"/>
        <end position="382"/>
    </location>
</feature>
<feature type="modified residue" description="N6-(pyridoxal phosphate)lysine" evidence="1">
    <location>
        <position position="183"/>
    </location>
</feature>
<proteinExistence type="inferred from homology"/>
<gene>
    <name evidence="1" type="primary">arnB</name>
    <name type="ordered locus">Pfl01_2841</name>
</gene>
<sequence>MSQAFLPFSRPSIGDEEIAAVEQVLRSGWITTGPKNQALEEQFAQYVGSRHAVALSSATGAMHVTLLALGIGPGDEVITPSQTWVSTANMISLLGATPVFVDVDRDTLMTDAARIEAAITPRTKAIIPVHYAGAAFDLDPLYALADKHGIAVIEDAAHAAGTRYKGRHVGSQGTAIFSFHAIKNMTCAEGAMFVTDDEALANRVRMLKFHGLGVDAYDRLTHGRKPQAQVIEPGFKYNLADINAAIALVQLERLDAINARRTELATQYLQKLEGLPVQPLAVPNYPQQHAWHLFILRIDSERCGMDREAFMKGLQEQGIGTGIHFIATHLHTWYRQRAPHLSLPDTEWNSARLCSIPLFPDMTDQDLDRVVGAIEHLMGKRP</sequence>
<name>ARNB_PSEPF</name>
<organism>
    <name type="scientific">Pseudomonas fluorescens (strain Pf0-1)</name>
    <dbReference type="NCBI Taxonomy" id="205922"/>
    <lineage>
        <taxon>Bacteria</taxon>
        <taxon>Pseudomonadati</taxon>
        <taxon>Pseudomonadota</taxon>
        <taxon>Gammaproteobacteria</taxon>
        <taxon>Pseudomonadales</taxon>
        <taxon>Pseudomonadaceae</taxon>
        <taxon>Pseudomonas</taxon>
    </lineage>
</organism>
<reference key="1">
    <citation type="journal article" date="2009" name="Genome Biol.">
        <title>Genomic and genetic analyses of diversity and plant interactions of Pseudomonas fluorescens.</title>
        <authorList>
            <person name="Silby M.W."/>
            <person name="Cerdeno-Tarraga A.M."/>
            <person name="Vernikos G.S."/>
            <person name="Giddens S.R."/>
            <person name="Jackson R.W."/>
            <person name="Preston G.M."/>
            <person name="Zhang X.-X."/>
            <person name="Moon C.D."/>
            <person name="Gehrig S.M."/>
            <person name="Godfrey S.A.C."/>
            <person name="Knight C.G."/>
            <person name="Malone J.G."/>
            <person name="Robinson Z."/>
            <person name="Spiers A.J."/>
            <person name="Harris S."/>
            <person name="Challis G.L."/>
            <person name="Yaxley A.M."/>
            <person name="Harris D."/>
            <person name="Seeger K."/>
            <person name="Murphy L."/>
            <person name="Rutter S."/>
            <person name="Squares R."/>
            <person name="Quail M.A."/>
            <person name="Saunders E."/>
            <person name="Mavromatis K."/>
            <person name="Brettin T.S."/>
            <person name="Bentley S.D."/>
            <person name="Hothersall J."/>
            <person name="Stephens E."/>
            <person name="Thomas C.M."/>
            <person name="Parkhill J."/>
            <person name="Levy S.B."/>
            <person name="Rainey P.B."/>
            <person name="Thomson N.R."/>
        </authorList>
    </citation>
    <scope>NUCLEOTIDE SEQUENCE [LARGE SCALE GENOMIC DNA]</scope>
    <source>
        <strain>Pf0-1</strain>
    </source>
</reference>
<protein>
    <recommendedName>
        <fullName evidence="1">UDP-4-amino-4-deoxy-L-arabinose--oxoglutarate aminotransferase</fullName>
        <ecNumber evidence="1">2.6.1.87</ecNumber>
    </recommendedName>
    <alternativeName>
        <fullName evidence="1">UDP-(beta-L-threo-pentapyranosyl-4''-ulose diphosphate) aminotransferase</fullName>
        <shortName evidence="1">UDP-Ara4O aminotransferase</shortName>
    </alternativeName>
    <alternativeName>
        <fullName evidence="1">UDP-4-amino-4-deoxy-L-arabinose aminotransferase</fullName>
    </alternativeName>
</protein>